<evidence type="ECO:0000250" key="1"/>
<evidence type="ECO:0000255" key="2">
    <source>
        <dbReference type="PROSITE-ProRule" id="PRU01066"/>
    </source>
</evidence>
<evidence type="ECO:0000305" key="3"/>
<protein>
    <recommendedName>
        <fullName>Glycine cleavage system H protein, mitochondrial</fullName>
    </recommendedName>
</protein>
<feature type="transit peptide" description="Mitochondrion" evidence="1">
    <location>
        <begin position="1"/>
        <end position="31"/>
    </location>
</feature>
<feature type="chain" id="PRO_0000010734" description="Glycine cleavage system H protein, mitochondrial">
    <location>
        <begin position="32"/>
        <end position="152" status="greater than"/>
    </location>
</feature>
<feature type="domain" description="Lipoyl-binding" evidence="2">
    <location>
        <begin position="53"/>
        <end position="135"/>
    </location>
</feature>
<feature type="modified residue" description="N6-lipoyllysine" evidence="1 2">
    <location>
        <position position="94"/>
    </location>
</feature>
<feature type="non-terminal residue">
    <location>
        <position position="152"/>
    </location>
</feature>
<keyword id="KW-0450">Lipoyl</keyword>
<keyword id="KW-0496">Mitochondrion</keyword>
<keyword id="KW-0809">Transit peptide</keyword>
<reference key="1">
    <citation type="journal article" date="1995" name="Mol. Gen. Genet.">
        <title>H-protein of glycine decarboxylase is encoded by multigene families in Flaveria pringlei and F. cronquistii (Asteraceae).</title>
        <authorList>
            <person name="Kopriva S."/>
            <person name="Bauwe H."/>
        </authorList>
    </citation>
    <scope>NUCLEOTIDE SEQUENCE [MRNA]</scope>
    <source>
        <tissue>Leaf</tissue>
    </source>
</reference>
<comment type="function">
    <text>The glycine cleavage system catalyzes the degradation of glycine. The H protein shuttles the methylamine group of glycine from the P protein to the T protein.</text>
</comment>
<comment type="cofactor">
    <cofactor>
        <name>(R)-lipoate</name>
        <dbReference type="ChEBI" id="CHEBI:83088"/>
    </cofactor>
    <text>Binds 1 lipoyl cofactor covalently.</text>
</comment>
<comment type="subunit">
    <text>The glycine cleavage system is composed of four proteins: P, T, L and H.</text>
</comment>
<comment type="subcellular location">
    <subcellularLocation>
        <location>Mitochondrion</location>
    </subcellularLocation>
</comment>
<comment type="similarity">
    <text evidence="3">Belongs to the GcvH family.</text>
</comment>
<dbReference type="EMBL" id="Z37530">
    <property type="protein sequence ID" value="CAA85768.1"/>
    <property type="molecule type" value="mRNA"/>
</dbReference>
<dbReference type="PIR" id="S49251">
    <property type="entry name" value="S49251"/>
</dbReference>
<dbReference type="SMR" id="P49360"/>
<dbReference type="GO" id="GO:0005960">
    <property type="term" value="C:glycine cleavage complex"/>
    <property type="evidence" value="ECO:0007669"/>
    <property type="project" value="InterPro"/>
</dbReference>
<dbReference type="GO" id="GO:0005739">
    <property type="term" value="C:mitochondrion"/>
    <property type="evidence" value="ECO:0007669"/>
    <property type="project" value="UniProtKB-SubCell"/>
</dbReference>
<dbReference type="GO" id="GO:0019464">
    <property type="term" value="P:glycine decarboxylation via glycine cleavage system"/>
    <property type="evidence" value="ECO:0007669"/>
    <property type="project" value="InterPro"/>
</dbReference>
<dbReference type="CDD" id="cd06848">
    <property type="entry name" value="GCS_H"/>
    <property type="match status" value="1"/>
</dbReference>
<dbReference type="FunFam" id="2.40.50.100:FF:000011">
    <property type="entry name" value="Glycine cleavage system H protein"/>
    <property type="match status" value="1"/>
</dbReference>
<dbReference type="Gene3D" id="2.40.50.100">
    <property type="match status" value="1"/>
</dbReference>
<dbReference type="HAMAP" id="MF_00272">
    <property type="entry name" value="GcvH"/>
    <property type="match status" value="1"/>
</dbReference>
<dbReference type="InterPro" id="IPR003016">
    <property type="entry name" value="2-oxoA_DH_lipoyl-BS"/>
</dbReference>
<dbReference type="InterPro" id="IPR000089">
    <property type="entry name" value="Biotin_lipoyl"/>
</dbReference>
<dbReference type="InterPro" id="IPR002930">
    <property type="entry name" value="GCV_H"/>
</dbReference>
<dbReference type="InterPro" id="IPR033753">
    <property type="entry name" value="GCV_H/Fam206"/>
</dbReference>
<dbReference type="InterPro" id="IPR017453">
    <property type="entry name" value="GCV_H_sub"/>
</dbReference>
<dbReference type="InterPro" id="IPR011053">
    <property type="entry name" value="Single_hybrid_motif"/>
</dbReference>
<dbReference type="NCBIfam" id="TIGR00527">
    <property type="entry name" value="gcvH"/>
    <property type="match status" value="1"/>
</dbReference>
<dbReference type="NCBIfam" id="NF002270">
    <property type="entry name" value="PRK01202.1"/>
    <property type="match status" value="1"/>
</dbReference>
<dbReference type="PANTHER" id="PTHR11715">
    <property type="entry name" value="GLYCINE CLEAVAGE SYSTEM H PROTEIN"/>
    <property type="match status" value="1"/>
</dbReference>
<dbReference type="PANTHER" id="PTHR11715:SF27">
    <property type="entry name" value="GLYCINE CLEAVAGE SYSTEM H PROTEIN 1, MITOCHONDRIAL-RELATED"/>
    <property type="match status" value="1"/>
</dbReference>
<dbReference type="Pfam" id="PF01597">
    <property type="entry name" value="GCV_H"/>
    <property type="match status" value="1"/>
</dbReference>
<dbReference type="SUPFAM" id="SSF51230">
    <property type="entry name" value="Single hybrid motif"/>
    <property type="match status" value="1"/>
</dbReference>
<dbReference type="PROSITE" id="PS50968">
    <property type="entry name" value="BIOTINYL_LIPOYL"/>
    <property type="match status" value="1"/>
</dbReference>
<dbReference type="PROSITE" id="PS00189">
    <property type="entry name" value="LIPOYL"/>
    <property type="match status" value="1"/>
</dbReference>
<name>GCSH_FLAPU</name>
<sequence length="152" mass="16196">MALRMWASSTANALRLSSATRPHYSPLSRCFSSVLDGLKYANSHEWVKHEGSVATVGITDHAQDHLGEVVFVDLPEAGGSVTKATGFGAVESVKATSDVNSPISGEIVEVNSKLSETPGLINSSPYEDGWMIKVKPSNPSELDSLMGAKEYT</sequence>
<accession>P49360</accession>
<proteinExistence type="evidence at transcript level"/>
<gene>
    <name type="primary">GDCSH</name>
    <name type="synonym">GCDH</name>
    <name type="synonym">GCSH</name>
</gene>
<organism>
    <name type="scientific">Flaveria pubescens</name>
    <name type="common">Yellowtops</name>
    <dbReference type="NCBI Taxonomy" id="35880"/>
    <lineage>
        <taxon>Eukaryota</taxon>
        <taxon>Viridiplantae</taxon>
        <taxon>Streptophyta</taxon>
        <taxon>Embryophyta</taxon>
        <taxon>Tracheophyta</taxon>
        <taxon>Spermatophyta</taxon>
        <taxon>Magnoliopsida</taxon>
        <taxon>eudicotyledons</taxon>
        <taxon>Gunneridae</taxon>
        <taxon>Pentapetalae</taxon>
        <taxon>asterids</taxon>
        <taxon>campanulids</taxon>
        <taxon>Asterales</taxon>
        <taxon>Asteraceae</taxon>
        <taxon>Asteroideae</taxon>
        <taxon>Heliantheae alliance</taxon>
        <taxon>Tageteae</taxon>
        <taxon>Flaveria</taxon>
    </lineage>
</organism>